<geneLocation type="chloroplast"/>
<protein>
    <recommendedName>
        <fullName evidence="2">Large ribosomal subunit protein uL23cz/uL23cy</fullName>
    </recommendedName>
    <alternativeName>
        <fullName>50S ribosomal protein L23, chloroplastic</fullName>
    </alternativeName>
</protein>
<reference key="1">
    <citation type="journal article" date="2003" name="Plant Syst. Evol.">
        <title>The chloroplast genome of the 'basal' angiosperm Calycanthus fertilis -- structural and phylogenetic analyses.</title>
        <authorList>
            <person name="Goremykin V."/>
            <person name="Hirsch-Ernst K.I."/>
            <person name="Woelfl S."/>
            <person name="Hellwig F.H."/>
        </authorList>
    </citation>
    <scope>NUCLEOTIDE SEQUENCE [LARGE SCALE GENOMIC DNA]</scope>
</reference>
<accession>Q7Y7N3</accession>
<keyword id="KW-0150">Chloroplast</keyword>
<keyword id="KW-0934">Plastid</keyword>
<keyword id="KW-0687">Ribonucleoprotein</keyword>
<keyword id="KW-0689">Ribosomal protein</keyword>
<keyword id="KW-0694">RNA-binding</keyword>
<keyword id="KW-0699">rRNA-binding</keyword>
<name>RK23_CALFG</name>
<dbReference type="EMBL" id="AJ428413">
    <property type="protein sequence ID" value="CAD28763.1"/>
    <property type="molecule type" value="Genomic_DNA"/>
</dbReference>
<dbReference type="EMBL" id="AJ428413">
    <property type="protein sequence ID" value="CAD28787.1"/>
    <property type="molecule type" value="Genomic_DNA"/>
</dbReference>
<dbReference type="SMR" id="Q7Y7N3"/>
<dbReference type="GO" id="GO:0009507">
    <property type="term" value="C:chloroplast"/>
    <property type="evidence" value="ECO:0007669"/>
    <property type="project" value="UniProtKB-SubCell"/>
</dbReference>
<dbReference type="GO" id="GO:1990904">
    <property type="term" value="C:ribonucleoprotein complex"/>
    <property type="evidence" value="ECO:0007669"/>
    <property type="project" value="UniProtKB-KW"/>
</dbReference>
<dbReference type="GO" id="GO:0005840">
    <property type="term" value="C:ribosome"/>
    <property type="evidence" value="ECO:0007669"/>
    <property type="project" value="UniProtKB-KW"/>
</dbReference>
<dbReference type="GO" id="GO:0019843">
    <property type="term" value="F:rRNA binding"/>
    <property type="evidence" value="ECO:0007669"/>
    <property type="project" value="UniProtKB-UniRule"/>
</dbReference>
<dbReference type="GO" id="GO:0003735">
    <property type="term" value="F:structural constituent of ribosome"/>
    <property type="evidence" value="ECO:0007669"/>
    <property type="project" value="InterPro"/>
</dbReference>
<dbReference type="GO" id="GO:0006412">
    <property type="term" value="P:translation"/>
    <property type="evidence" value="ECO:0007669"/>
    <property type="project" value="UniProtKB-UniRule"/>
</dbReference>
<dbReference type="FunFam" id="3.30.70.330:FF:000002">
    <property type="entry name" value="50S ribosomal protein L23, chloroplastic"/>
    <property type="match status" value="1"/>
</dbReference>
<dbReference type="Gene3D" id="3.30.70.330">
    <property type="match status" value="1"/>
</dbReference>
<dbReference type="HAMAP" id="MF_01369_B">
    <property type="entry name" value="Ribosomal_uL23_B"/>
    <property type="match status" value="1"/>
</dbReference>
<dbReference type="InterPro" id="IPR012677">
    <property type="entry name" value="Nucleotide-bd_a/b_plait_sf"/>
</dbReference>
<dbReference type="InterPro" id="IPR013025">
    <property type="entry name" value="Ribosomal_uL23-like"/>
</dbReference>
<dbReference type="InterPro" id="IPR012678">
    <property type="entry name" value="Ribosomal_uL23/eL15/eS24_sf"/>
</dbReference>
<dbReference type="InterPro" id="IPR001014">
    <property type="entry name" value="Ribosomal_uL23_CS"/>
</dbReference>
<dbReference type="PANTHER" id="PTHR11620">
    <property type="entry name" value="60S RIBOSOMAL PROTEIN L23A"/>
    <property type="match status" value="1"/>
</dbReference>
<dbReference type="Pfam" id="PF00276">
    <property type="entry name" value="Ribosomal_L23"/>
    <property type="match status" value="1"/>
</dbReference>
<dbReference type="SUPFAM" id="SSF54189">
    <property type="entry name" value="Ribosomal proteins S24e, L23 and L15e"/>
    <property type="match status" value="1"/>
</dbReference>
<dbReference type="PROSITE" id="PS00050">
    <property type="entry name" value="RIBOSOMAL_L23"/>
    <property type="match status" value="1"/>
</dbReference>
<proteinExistence type="inferred from homology"/>
<gene>
    <name type="primary">rpl23-A</name>
</gene>
<gene>
    <name type="primary">rpl23-B</name>
</gene>
<feature type="chain" id="PRO_0000272889" description="Large ribosomal subunit protein uL23cz/uL23cy">
    <location>
        <begin position="1"/>
        <end position="89"/>
    </location>
</feature>
<comment type="function">
    <text evidence="1">Binds to 23S rRNA.</text>
</comment>
<comment type="subunit">
    <text evidence="1">Part of the 50S ribosomal subunit.</text>
</comment>
<comment type="subcellular location">
    <subcellularLocation>
        <location>Plastid</location>
        <location>Chloroplast</location>
    </subcellularLocation>
</comment>
<comment type="similarity">
    <text evidence="2">Belongs to the universal ribosomal protein uL23 family.</text>
</comment>
<organism>
    <name type="scientific">Calycanthus floridus var. glaucus</name>
    <name type="common">Eastern sweetshrub</name>
    <name type="synonym">Calycanthus fertilis var. ferax</name>
    <dbReference type="NCBI Taxonomy" id="212734"/>
    <lineage>
        <taxon>Eukaryota</taxon>
        <taxon>Viridiplantae</taxon>
        <taxon>Streptophyta</taxon>
        <taxon>Embryophyta</taxon>
        <taxon>Tracheophyta</taxon>
        <taxon>Spermatophyta</taxon>
        <taxon>Magnoliopsida</taxon>
        <taxon>Magnoliidae</taxon>
        <taxon>Laurales</taxon>
        <taxon>Calycanthaceae</taxon>
        <taxon>Calycanthus</taxon>
    </lineage>
</organism>
<sequence>MDGIKYAVFTEKSIRLLGNNQYTSNVESGSTRTEIKHWVELFFGVKVIAMNSHRLPGKGRRMGHTMHYRRMIITLQPGYSIPPLIEKRT</sequence>
<evidence type="ECO:0000250" key="1"/>
<evidence type="ECO:0000305" key="2"/>